<evidence type="ECO:0000255" key="1">
    <source>
        <dbReference type="HAMAP-Rule" id="MF_00577"/>
    </source>
</evidence>
<organism>
    <name type="scientific">Rubrobacter xylanophilus (strain DSM 9941 / JCM 11954 / NBRC 16129 / PRD-1)</name>
    <dbReference type="NCBI Taxonomy" id="266117"/>
    <lineage>
        <taxon>Bacteria</taxon>
        <taxon>Bacillati</taxon>
        <taxon>Actinomycetota</taxon>
        <taxon>Rubrobacteria</taxon>
        <taxon>Rubrobacterales</taxon>
        <taxon>Rubrobacteraceae</taxon>
        <taxon>Rubrobacter</taxon>
    </lineage>
</organism>
<gene>
    <name evidence="1" type="primary">hutU</name>
    <name type="ordered locus">Rxyl_0583</name>
</gene>
<reference key="1">
    <citation type="submission" date="2006-06" db="EMBL/GenBank/DDBJ databases">
        <title>Complete sequence of Rubrobacter xylanophilus DSM 9941.</title>
        <authorList>
            <consortium name="US DOE Joint Genome Institute"/>
            <person name="Copeland A."/>
            <person name="Lucas S."/>
            <person name="Lapidus A."/>
            <person name="Barry K."/>
            <person name="Detter J.C."/>
            <person name="Glavina del Rio T."/>
            <person name="Hammon N."/>
            <person name="Israni S."/>
            <person name="Dalin E."/>
            <person name="Tice H."/>
            <person name="Pitluck S."/>
            <person name="Munk A.C."/>
            <person name="Brettin T."/>
            <person name="Bruce D."/>
            <person name="Han C."/>
            <person name="Tapia R."/>
            <person name="Gilna P."/>
            <person name="Schmutz J."/>
            <person name="Larimer F."/>
            <person name="Land M."/>
            <person name="Hauser L."/>
            <person name="Kyrpides N."/>
            <person name="Lykidis A."/>
            <person name="da Costa M.S."/>
            <person name="Rainey F.A."/>
            <person name="Empadinhas N."/>
            <person name="Jolivet E."/>
            <person name="Battista J.R."/>
            <person name="Richardson P."/>
        </authorList>
    </citation>
    <scope>NUCLEOTIDE SEQUENCE [LARGE SCALE GENOMIC DNA]</scope>
    <source>
        <strain>DSM 9941 / JCM 11954 / NBRC 16129 / PRD-1</strain>
    </source>
</reference>
<dbReference type="EC" id="4.2.1.49" evidence="1"/>
<dbReference type="EMBL" id="CP000386">
    <property type="protein sequence ID" value="ABG03555.1"/>
    <property type="molecule type" value="Genomic_DNA"/>
</dbReference>
<dbReference type="RefSeq" id="WP_011563573.1">
    <property type="nucleotide sequence ID" value="NC_008148.1"/>
</dbReference>
<dbReference type="SMR" id="Q1AYH3"/>
<dbReference type="STRING" id="266117.Rxyl_0583"/>
<dbReference type="KEGG" id="rxy:Rxyl_0583"/>
<dbReference type="eggNOG" id="COG2987">
    <property type="taxonomic scope" value="Bacteria"/>
</dbReference>
<dbReference type="HOGENOM" id="CLU_018868_0_1_11"/>
<dbReference type="OrthoDB" id="9764874at2"/>
<dbReference type="PhylomeDB" id="Q1AYH3"/>
<dbReference type="UniPathway" id="UPA00379">
    <property type="reaction ID" value="UER00550"/>
</dbReference>
<dbReference type="Proteomes" id="UP000006637">
    <property type="component" value="Chromosome"/>
</dbReference>
<dbReference type="GO" id="GO:0005737">
    <property type="term" value="C:cytoplasm"/>
    <property type="evidence" value="ECO:0007669"/>
    <property type="project" value="UniProtKB-SubCell"/>
</dbReference>
<dbReference type="GO" id="GO:0016153">
    <property type="term" value="F:urocanate hydratase activity"/>
    <property type="evidence" value="ECO:0007669"/>
    <property type="project" value="UniProtKB-UniRule"/>
</dbReference>
<dbReference type="GO" id="GO:0019556">
    <property type="term" value="P:L-histidine catabolic process to glutamate and formamide"/>
    <property type="evidence" value="ECO:0007669"/>
    <property type="project" value="UniProtKB-UniPathway"/>
</dbReference>
<dbReference type="GO" id="GO:0019557">
    <property type="term" value="P:L-histidine catabolic process to glutamate and formate"/>
    <property type="evidence" value="ECO:0007669"/>
    <property type="project" value="UniProtKB-UniPathway"/>
</dbReference>
<dbReference type="FunFam" id="3.40.50.10730:FF:000001">
    <property type="entry name" value="Urocanate hydratase"/>
    <property type="match status" value="1"/>
</dbReference>
<dbReference type="Gene3D" id="3.40.50.10730">
    <property type="entry name" value="Urocanase like domains"/>
    <property type="match status" value="1"/>
</dbReference>
<dbReference type="Gene3D" id="3.40.1770.10">
    <property type="entry name" value="Urocanase superfamily"/>
    <property type="match status" value="1"/>
</dbReference>
<dbReference type="HAMAP" id="MF_00577">
    <property type="entry name" value="HutU"/>
    <property type="match status" value="1"/>
</dbReference>
<dbReference type="InterPro" id="IPR055351">
    <property type="entry name" value="Urocanase"/>
</dbReference>
<dbReference type="InterPro" id="IPR023637">
    <property type="entry name" value="Urocanase-like"/>
</dbReference>
<dbReference type="InterPro" id="IPR035401">
    <property type="entry name" value="Urocanase_C"/>
</dbReference>
<dbReference type="InterPro" id="IPR038364">
    <property type="entry name" value="Urocanase_central_sf"/>
</dbReference>
<dbReference type="InterPro" id="IPR023636">
    <property type="entry name" value="Urocanase_CS"/>
</dbReference>
<dbReference type="InterPro" id="IPR035400">
    <property type="entry name" value="Urocanase_N"/>
</dbReference>
<dbReference type="InterPro" id="IPR035085">
    <property type="entry name" value="Urocanase_Rossmann-like"/>
</dbReference>
<dbReference type="InterPro" id="IPR036190">
    <property type="entry name" value="Urocanase_sf"/>
</dbReference>
<dbReference type="NCBIfam" id="TIGR01228">
    <property type="entry name" value="hutU"/>
    <property type="match status" value="1"/>
</dbReference>
<dbReference type="NCBIfam" id="NF003820">
    <property type="entry name" value="PRK05414.1"/>
    <property type="match status" value="1"/>
</dbReference>
<dbReference type="PANTHER" id="PTHR12216">
    <property type="entry name" value="UROCANATE HYDRATASE"/>
    <property type="match status" value="1"/>
</dbReference>
<dbReference type="PANTHER" id="PTHR12216:SF4">
    <property type="entry name" value="UROCANATE HYDRATASE"/>
    <property type="match status" value="1"/>
</dbReference>
<dbReference type="Pfam" id="PF01175">
    <property type="entry name" value="Urocanase"/>
    <property type="match status" value="1"/>
</dbReference>
<dbReference type="Pfam" id="PF17392">
    <property type="entry name" value="Urocanase_C"/>
    <property type="match status" value="1"/>
</dbReference>
<dbReference type="Pfam" id="PF17391">
    <property type="entry name" value="Urocanase_N"/>
    <property type="match status" value="1"/>
</dbReference>
<dbReference type="PIRSF" id="PIRSF001423">
    <property type="entry name" value="Urocanate_hydrat"/>
    <property type="match status" value="1"/>
</dbReference>
<dbReference type="SUPFAM" id="SSF111326">
    <property type="entry name" value="Urocanase"/>
    <property type="match status" value="1"/>
</dbReference>
<dbReference type="PROSITE" id="PS01233">
    <property type="entry name" value="UROCANASE"/>
    <property type="match status" value="1"/>
</dbReference>
<name>HUTU_RUBXD</name>
<protein>
    <recommendedName>
        <fullName evidence="1">Urocanate hydratase</fullName>
        <shortName evidence="1">Urocanase</shortName>
        <ecNumber evidence="1">4.2.1.49</ecNumber>
    </recommendedName>
    <alternativeName>
        <fullName evidence="1">Imidazolonepropionate hydrolase</fullName>
    </alternativeName>
</protein>
<keyword id="KW-0963">Cytoplasm</keyword>
<keyword id="KW-0369">Histidine metabolism</keyword>
<keyword id="KW-0456">Lyase</keyword>
<keyword id="KW-0520">NAD</keyword>
<keyword id="KW-1185">Reference proteome</keyword>
<comment type="function">
    <text evidence="1">Catalyzes the conversion of urocanate to 4-imidazolone-5-propionate.</text>
</comment>
<comment type="catalytic activity">
    <reaction evidence="1">
        <text>4-imidazolone-5-propanoate = trans-urocanate + H2O</text>
        <dbReference type="Rhea" id="RHEA:13101"/>
        <dbReference type="ChEBI" id="CHEBI:15377"/>
        <dbReference type="ChEBI" id="CHEBI:17771"/>
        <dbReference type="ChEBI" id="CHEBI:77893"/>
        <dbReference type="EC" id="4.2.1.49"/>
    </reaction>
</comment>
<comment type="cofactor">
    <cofactor evidence="1">
        <name>NAD(+)</name>
        <dbReference type="ChEBI" id="CHEBI:57540"/>
    </cofactor>
    <text evidence="1">Binds 1 NAD(+) per subunit.</text>
</comment>
<comment type="pathway">
    <text evidence="1">Amino-acid degradation; L-histidine degradation into L-glutamate; N-formimidoyl-L-glutamate from L-histidine: step 2/3.</text>
</comment>
<comment type="subcellular location">
    <subcellularLocation>
        <location evidence="1">Cytoplasm</location>
    </subcellularLocation>
</comment>
<comment type="similarity">
    <text evidence="1">Belongs to the urocanase family.</text>
</comment>
<sequence length="554" mass="60214">MTDGKTTTVRAPRGTELSCKGWHQEGALRMLMNNLDPEVAERPEELVVYGGTGKAARSWECFWAIVEALRGLDGDETLLVQSGKPVAVFRTHPWAPRVLIANSLLVPEWADWETFRELERAGLTMFGQMTAGSWIYIGTQGILQGTYETFAALAEQRFGGTLRGRVCLTAGLGGMGGAQPLAITMNEGVALCVEVDPRRIDRRLEHRYLDERIDDLDAAVERAEEARREGEPLSIGIPGNAAEVFPALLERGYVPDAVTDQTSAHDPLGGYIPAGYTLEEAAELREADPGRYVREARASMARHCAAMVGFMERGAEVFDYGNNLRGEARLGGFERAFSYPGFVPAYIRPLFCEGKGPFRWAALSGDPDDIAATDEAVLELFPENGRLVRWIRQARERVRFQGLPARICWLGAGERHRAGLRFNELVAGGTISAPIVIGRDHLDSGSVASPYRETEGMRDGSDAIADWPVLNALLNTASGASWVAVHHGGGVGIGKSIHAGAQVVVDGTEEGAARIERVLTNDPSLGVVRHADAGYERAREAARALGIRMPMLGR</sequence>
<accession>Q1AYH3</accession>
<feature type="chain" id="PRO_1000082351" description="Urocanate hydratase">
    <location>
        <begin position="1"/>
        <end position="554"/>
    </location>
</feature>
<feature type="active site" evidence="1">
    <location>
        <position position="408"/>
    </location>
</feature>
<feature type="binding site" evidence="1">
    <location>
        <begin position="50"/>
        <end position="51"/>
    </location>
    <ligand>
        <name>NAD(+)</name>
        <dbReference type="ChEBI" id="CHEBI:57540"/>
    </ligand>
</feature>
<feature type="binding site" evidence="1">
    <location>
        <position position="128"/>
    </location>
    <ligand>
        <name>NAD(+)</name>
        <dbReference type="ChEBI" id="CHEBI:57540"/>
    </ligand>
</feature>
<feature type="binding site" evidence="1">
    <location>
        <begin position="174"/>
        <end position="176"/>
    </location>
    <ligand>
        <name>NAD(+)</name>
        <dbReference type="ChEBI" id="CHEBI:57540"/>
    </ligand>
</feature>
<feature type="binding site" evidence="1">
    <location>
        <position position="194"/>
    </location>
    <ligand>
        <name>NAD(+)</name>
        <dbReference type="ChEBI" id="CHEBI:57540"/>
    </ligand>
</feature>
<feature type="binding site" evidence="1">
    <location>
        <position position="199"/>
    </location>
    <ligand>
        <name>NAD(+)</name>
        <dbReference type="ChEBI" id="CHEBI:57540"/>
    </ligand>
</feature>
<feature type="binding site" evidence="1">
    <location>
        <begin position="240"/>
        <end position="241"/>
    </location>
    <ligand>
        <name>NAD(+)</name>
        <dbReference type="ChEBI" id="CHEBI:57540"/>
    </ligand>
</feature>
<feature type="binding site" evidence="1">
    <location>
        <begin position="261"/>
        <end position="265"/>
    </location>
    <ligand>
        <name>NAD(+)</name>
        <dbReference type="ChEBI" id="CHEBI:57540"/>
    </ligand>
</feature>
<feature type="binding site" evidence="1">
    <location>
        <begin position="271"/>
        <end position="272"/>
    </location>
    <ligand>
        <name>NAD(+)</name>
        <dbReference type="ChEBI" id="CHEBI:57540"/>
    </ligand>
</feature>
<feature type="binding site" evidence="1">
    <location>
        <position position="320"/>
    </location>
    <ligand>
        <name>NAD(+)</name>
        <dbReference type="ChEBI" id="CHEBI:57540"/>
    </ligand>
</feature>
<feature type="binding site" evidence="1">
    <location>
        <position position="490"/>
    </location>
    <ligand>
        <name>NAD(+)</name>
        <dbReference type="ChEBI" id="CHEBI:57540"/>
    </ligand>
</feature>
<proteinExistence type="inferred from homology"/>